<dbReference type="EC" id="7.6.2.-" evidence="1"/>
<dbReference type="EMBL" id="CP000125">
    <property type="protein sequence ID" value="ABA53032.1"/>
    <property type="molecule type" value="Genomic_DNA"/>
</dbReference>
<dbReference type="RefSeq" id="WP_004529787.1">
    <property type="nucleotide sequence ID" value="NC_007435.1"/>
</dbReference>
<dbReference type="SMR" id="Q3JHM1"/>
<dbReference type="EnsemblBacteria" id="ABA53032">
    <property type="protein sequence ID" value="ABA53032"/>
    <property type="gene ID" value="BURPS1710b_A1775"/>
</dbReference>
<dbReference type="KEGG" id="bpm:BURPS1710b_A1775"/>
<dbReference type="HOGENOM" id="CLU_000604_1_11_4"/>
<dbReference type="Proteomes" id="UP000002700">
    <property type="component" value="Chromosome II"/>
</dbReference>
<dbReference type="GO" id="GO:0005886">
    <property type="term" value="C:plasma membrane"/>
    <property type="evidence" value="ECO:0007669"/>
    <property type="project" value="UniProtKB-SubCell"/>
</dbReference>
<dbReference type="GO" id="GO:0005524">
    <property type="term" value="F:ATP binding"/>
    <property type="evidence" value="ECO:0007669"/>
    <property type="project" value="UniProtKB-KW"/>
</dbReference>
<dbReference type="GO" id="GO:0016887">
    <property type="term" value="F:ATP hydrolysis activity"/>
    <property type="evidence" value="ECO:0007669"/>
    <property type="project" value="InterPro"/>
</dbReference>
<dbReference type="CDD" id="cd03214">
    <property type="entry name" value="ABC_Iron-Siderophores_B12_Hemin"/>
    <property type="match status" value="1"/>
</dbReference>
<dbReference type="Gene3D" id="3.40.50.300">
    <property type="entry name" value="P-loop containing nucleotide triphosphate hydrolases"/>
    <property type="match status" value="1"/>
</dbReference>
<dbReference type="InterPro" id="IPR003593">
    <property type="entry name" value="AAA+_ATPase"/>
</dbReference>
<dbReference type="InterPro" id="IPR003439">
    <property type="entry name" value="ABC_transporter-like_ATP-bd"/>
</dbReference>
<dbReference type="InterPro" id="IPR017871">
    <property type="entry name" value="ABC_transporter-like_CS"/>
</dbReference>
<dbReference type="InterPro" id="IPR027417">
    <property type="entry name" value="P-loop_NTPase"/>
</dbReference>
<dbReference type="NCBIfam" id="NF010067">
    <property type="entry name" value="PRK13547.1"/>
    <property type="match status" value="1"/>
</dbReference>
<dbReference type="NCBIfam" id="NF010068">
    <property type="entry name" value="PRK13548.1"/>
    <property type="match status" value="1"/>
</dbReference>
<dbReference type="PANTHER" id="PTHR42794">
    <property type="entry name" value="HEMIN IMPORT ATP-BINDING PROTEIN HMUV"/>
    <property type="match status" value="1"/>
</dbReference>
<dbReference type="PANTHER" id="PTHR42794:SF1">
    <property type="entry name" value="HEMIN IMPORT ATP-BINDING PROTEIN HMUV"/>
    <property type="match status" value="1"/>
</dbReference>
<dbReference type="Pfam" id="PF00005">
    <property type="entry name" value="ABC_tran"/>
    <property type="match status" value="1"/>
</dbReference>
<dbReference type="SMART" id="SM00382">
    <property type="entry name" value="AAA"/>
    <property type="match status" value="1"/>
</dbReference>
<dbReference type="SUPFAM" id="SSF52540">
    <property type="entry name" value="P-loop containing nucleoside triphosphate hydrolases"/>
    <property type="match status" value="1"/>
</dbReference>
<dbReference type="PROSITE" id="PS00211">
    <property type="entry name" value="ABC_TRANSPORTER_1"/>
    <property type="match status" value="1"/>
</dbReference>
<dbReference type="PROSITE" id="PS50893">
    <property type="entry name" value="ABC_TRANSPORTER_2"/>
    <property type="match status" value="1"/>
</dbReference>
<dbReference type="PROSITE" id="PS51261">
    <property type="entry name" value="HMUV"/>
    <property type="match status" value="1"/>
</dbReference>
<protein>
    <recommendedName>
        <fullName evidence="1">Hemin import ATP-binding protein HmuV</fullName>
        <ecNumber evidence="1">7.6.2.-</ecNumber>
    </recommendedName>
</protein>
<organism>
    <name type="scientific">Burkholderia pseudomallei (strain 1710b)</name>
    <dbReference type="NCBI Taxonomy" id="320372"/>
    <lineage>
        <taxon>Bacteria</taxon>
        <taxon>Pseudomonadati</taxon>
        <taxon>Pseudomonadota</taxon>
        <taxon>Betaproteobacteria</taxon>
        <taxon>Burkholderiales</taxon>
        <taxon>Burkholderiaceae</taxon>
        <taxon>Burkholderia</taxon>
        <taxon>pseudomallei group</taxon>
    </lineage>
</organism>
<reference key="1">
    <citation type="journal article" date="2010" name="Genome Biol. Evol.">
        <title>Continuing evolution of Burkholderia mallei through genome reduction and large-scale rearrangements.</title>
        <authorList>
            <person name="Losada L."/>
            <person name="Ronning C.M."/>
            <person name="DeShazer D."/>
            <person name="Woods D."/>
            <person name="Fedorova N."/>
            <person name="Kim H.S."/>
            <person name="Shabalina S.A."/>
            <person name="Pearson T.R."/>
            <person name="Brinkac L."/>
            <person name="Tan P."/>
            <person name="Nandi T."/>
            <person name="Crabtree J."/>
            <person name="Badger J."/>
            <person name="Beckstrom-Sternberg S."/>
            <person name="Saqib M."/>
            <person name="Schutzer S.E."/>
            <person name="Keim P."/>
            <person name="Nierman W.C."/>
        </authorList>
    </citation>
    <scope>NUCLEOTIDE SEQUENCE [LARGE SCALE GENOMIC DNA]</scope>
    <source>
        <strain>1710b</strain>
    </source>
</reference>
<name>HMUV_BURP1</name>
<keyword id="KW-0067">ATP-binding</keyword>
<keyword id="KW-0997">Cell inner membrane</keyword>
<keyword id="KW-1003">Cell membrane</keyword>
<keyword id="KW-0472">Membrane</keyword>
<keyword id="KW-0547">Nucleotide-binding</keyword>
<keyword id="KW-1278">Translocase</keyword>
<keyword id="KW-0813">Transport</keyword>
<evidence type="ECO:0000255" key="1">
    <source>
        <dbReference type="HAMAP-Rule" id="MF_01718"/>
    </source>
</evidence>
<accession>Q3JHM1</accession>
<sequence length="272" mass="28415">MLNADHLHVARDGRAILNDLSIRIAPGCVTALLGRNGAGKSTLLGVLAGDLPAGGLARGATVRGGVALNGEPLHAIDAPRLARLRAVLPQASRPAFAFSAREIVLLGRYPHARRAGALTHADGEIASQALALAGATALEARDVTTLSGGELARVQFARVLAQLWPPPGAAQPPRYLLLDEPTAALDLAHQHQLLDTVRRLSRDWNLGVLTIVHDPNLAARHADRIAMLADGAIVAQGAPADVLRPEPIARCYGFRVRLVDAGDGVAPVIVPA</sequence>
<feature type="chain" id="PRO_0000269583" description="Hemin import ATP-binding protein HmuV">
    <location>
        <begin position="1"/>
        <end position="272"/>
    </location>
</feature>
<feature type="domain" description="ABC transporter" evidence="1">
    <location>
        <begin position="2"/>
        <end position="255"/>
    </location>
</feature>
<feature type="binding site" evidence="1">
    <location>
        <begin position="34"/>
        <end position="41"/>
    </location>
    <ligand>
        <name>ATP</name>
        <dbReference type="ChEBI" id="CHEBI:30616"/>
    </ligand>
</feature>
<gene>
    <name evidence="1" type="primary">hmuV</name>
    <name type="ordered locus">BURPS1710b_A1775</name>
</gene>
<proteinExistence type="inferred from homology"/>
<comment type="function">
    <text evidence="1">Part of the ABC transporter complex HmuTUV involved in hemin import. Responsible for energy coupling to the transport system.</text>
</comment>
<comment type="subunit">
    <text evidence="1">The complex is composed of two ATP-binding proteins (HmuV), two transmembrane proteins (HmuU) and a solute-binding protein (HmuT).</text>
</comment>
<comment type="subcellular location">
    <subcellularLocation>
        <location evidence="1">Cell inner membrane</location>
        <topology evidence="1">Peripheral membrane protein</topology>
    </subcellularLocation>
</comment>
<comment type="similarity">
    <text evidence="1">Belongs to the ABC transporter superfamily. Heme (hemin) importer (TC 3.A.1.14.5) family.</text>
</comment>